<proteinExistence type="inferred from homology"/>
<comment type="function">
    <text evidence="1">Binds to 23S rRNA. Forms part of two intersubunit bridges in the 70S ribosome.</text>
</comment>
<comment type="subunit">
    <text evidence="1">Part of the 50S ribosomal subunit. Forms a cluster with proteins L3 and L19. In the 70S ribosome, L14 and L19 interact and together make contacts with the 16S rRNA in bridges B5 and B8.</text>
</comment>
<comment type="similarity">
    <text evidence="1">Belongs to the universal ribosomal protein uL14 family.</text>
</comment>
<accession>A1JS23</accession>
<reference key="1">
    <citation type="journal article" date="2006" name="PLoS Genet.">
        <title>The complete genome sequence and comparative genome analysis of the high pathogenicity Yersinia enterocolitica strain 8081.</title>
        <authorList>
            <person name="Thomson N.R."/>
            <person name="Howard S."/>
            <person name="Wren B.W."/>
            <person name="Holden M.T.G."/>
            <person name="Crossman L."/>
            <person name="Challis G.L."/>
            <person name="Churcher C."/>
            <person name="Mungall K."/>
            <person name="Brooks K."/>
            <person name="Chillingworth T."/>
            <person name="Feltwell T."/>
            <person name="Abdellah Z."/>
            <person name="Hauser H."/>
            <person name="Jagels K."/>
            <person name="Maddison M."/>
            <person name="Moule S."/>
            <person name="Sanders M."/>
            <person name="Whitehead S."/>
            <person name="Quail M.A."/>
            <person name="Dougan G."/>
            <person name="Parkhill J."/>
            <person name="Prentice M.B."/>
        </authorList>
    </citation>
    <scope>NUCLEOTIDE SEQUENCE [LARGE SCALE GENOMIC DNA]</scope>
    <source>
        <strain>NCTC 13174 / 8081</strain>
    </source>
</reference>
<sequence length="123" mass="13582">MIQEQTMLNVADNSGARRVMCIKVLGGSHRRYAGIGDIIKITIKEAIPRGKVKKGDVLKAVVVRTKKGVRRPDGSVIRFDGNACVILNNNSEQPIGTRIFGPVTRELRNEKFMKIISLAPEVL</sequence>
<evidence type="ECO:0000255" key="1">
    <source>
        <dbReference type="HAMAP-Rule" id="MF_01367"/>
    </source>
</evidence>
<evidence type="ECO:0000305" key="2"/>
<name>RL14_YERE8</name>
<gene>
    <name evidence="1" type="primary">rplN</name>
    <name type="ordered locus">YE3913</name>
</gene>
<dbReference type="EMBL" id="AM286415">
    <property type="protein sequence ID" value="CAL13932.1"/>
    <property type="molecule type" value="Genomic_DNA"/>
</dbReference>
<dbReference type="RefSeq" id="WP_002213325.1">
    <property type="nucleotide sequence ID" value="NC_008800.1"/>
</dbReference>
<dbReference type="RefSeq" id="YP_001008058.1">
    <property type="nucleotide sequence ID" value="NC_008800.1"/>
</dbReference>
<dbReference type="SMR" id="A1JS23"/>
<dbReference type="GeneID" id="97454241"/>
<dbReference type="KEGG" id="yen:YE3913"/>
<dbReference type="PATRIC" id="fig|393305.7.peg.4163"/>
<dbReference type="eggNOG" id="COG0093">
    <property type="taxonomic scope" value="Bacteria"/>
</dbReference>
<dbReference type="HOGENOM" id="CLU_095071_2_1_6"/>
<dbReference type="OrthoDB" id="9806379at2"/>
<dbReference type="Proteomes" id="UP000000642">
    <property type="component" value="Chromosome"/>
</dbReference>
<dbReference type="GO" id="GO:0022625">
    <property type="term" value="C:cytosolic large ribosomal subunit"/>
    <property type="evidence" value="ECO:0007669"/>
    <property type="project" value="TreeGrafter"/>
</dbReference>
<dbReference type="GO" id="GO:0070180">
    <property type="term" value="F:large ribosomal subunit rRNA binding"/>
    <property type="evidence" value="ECO:0007669"/>
    <property type="project" value="TreeGrafter"/>
</dbReference>
<dbReference type="GO" id="GO:0003735">
    <property type="term" value="F:structural constituent of ribosome"/>
    <property type="evidence" value="ECO:0007669"/>
    <property type="project" value="InterPro"/>
</dbReference>
<dbReference type="GO" id="GO:0006412">
    <property type="term" value="P:translation"/>
    <property type="evidence" value="ECO:0007669"/>
    <property type="project" value="UniProtKB-UniRule"/>
</dbReference>
<dbReference type="CDD" id="cd00337">
    <property type="entry name" value="Ribosomal_uL14"/>
    <property type="match status" value="1"/>
</dbReference>
<dbReference type="FunFam" id="2.40.150.20:FF:000001">
    <property type="entry name" value="50S ribosomal protein L14"/>
    <property type="match status" value="1"/>
</dbReference>
<dbReference type="Gene3D" id="2.40.150.20">
    <property type="entry name" value="Ribosomal protein L14"/>
    <property type="match status" value="1"/>
</dbReference>
<dbReference type="HAMAP" id="MF_01367">
    <property type="entry name" value="Ribosomal_uL14"/>
    <property type="match status" value="1"/>
</dbReference>
<dbReference type="InterPro" id="IPR000218">
    <property type="entry name" value="Ribosomal_uL14"/>
</dbReference>
<dbReference type="InterPro" id="IPR005745">
    <property type="entry name" value="Ribosomal_uL14_bac-type"/>
</dbReference>
<dbReference type="InterPro" id="IPR019972">
    <property type="entry name" value="Ribosomal_uL14_CS"/>
</dbReference>
<dbReference type="InterPro" id="IPR036853">
    <property type="entry name" value="Ribosomal_uL14_sf"/>
</dbReference>
<dbReference type="NCBIfam" id="TIGR01067">
    <property type="entry name" value="rplN_bact"/>
    <property type="match status" value="1"/>
</dbReference>
<dbReference type="PANTHER" id="PTHR11761">
    <property type="entry name" value="50S/60S RIBOSOMAL PROTEIN L14/L23"/>
    <property type="match status" value="1"/>
</dbReference>
<dbReference type="PANTHER" id="PTHR11761:SF3">
    <property type="entry name" value="LARGE RIBOSOMAL SUBUNIT PROTEIN UL14M"/>
    <property type="match status" value="1"/>
</dbReference>
<dbReference type="Pfam" id="PF00238">
    <property type="entry name" value="Ribosomal_L14"/>
    <property type="match status" value="1"/>
</dbReference>
<dbReference type="SMART" id="SM01374">
    <property type="entry name" value="Ribosomal_L14"/>
    <property type="match status" value="1"/>
</dbReference>
<dbReference type="SUPFAM" id="SSF50193">
    <property type="entry name" value="Ribosomal protein L14"/>
    <property type="match status" value="1"/>
</dbReference>
<dbReference type="PROSITE" id="PS00049">
    <property type="entry name" value="RIBOSOMAL_L14"/>
    <property type="match status" value="1"/>
</dbReference>
<protein>
    <recommendedName>
        <fullName evidence="1">Large ribosomal subunit protein uL14</fullName>
    </recommendedName>
    <alternativeName>
        <fullName evidence="2">50S ribosomal protein L14</fullName>
    </alternativeName>
</protein>
<feature type="chain" id="PRO_1000055754" description="Large ribosomal subunit protein uL14">
    <location>
        <begin position="1"/>
        <end position="123"/>
    </location>
</feature>
<keyword id="KW-0687">Ribonucleoprotein</keyword>
<keyword id="KW-0689">Ribosomal protein</keyword>
<keyword id="KW-0694">RNA-binding</keyword>
<keyword id="KW-0699">rRNA-binding</keyword>
<organism>
    <name type="scientific">Yersinia enterocolitica serotype O:8 / biotype 1B (strain NCTC 13174 / 8081)</name>
    <dbReference type="NCBI Taxonomy" id="393305"/>
    <lineage>
        <taxon>Bacteria</taxon>
        <taxon>Pseudomonadati</taxon>
        <taxon>Pseudomonadota</taxon>
        <taxon>Gammaproteobacteria</taxon>
        <taxon>Enterobacterales</taxon>
        <taxon>Yersiniaceae</taxon>
        <taxon>Yersinia</taxon>
    </lineage>
</organism>